<proteinExistence type="evidence at protein level"/>
<dbReference type="EMBL" id="F14497">
    <property type="protein sequence ID" value="CAA23089.1"/>
    <property type="molecule type" value="mRNA"/>
</dbReference>
<dbReference type="EMBL" id="AB005624">
    <property type="protein sequence ID" value="BAA21510.1"/>
    <property type="molecule type" value="mRNA"/>
</dbReference>
<dbReference type="RefSeq" id="NP_999499.1">
    <property type="nucleotide sequence ID" value="NM_214334.1"/>
</dbReference>
<dbReference type="PDB" id="3J7P">
    <property type="method" value="EM"/>
    <property type="resolution" value="3.50 A"/>
    <property type="chains" value="SP=1-145"/>
</dbReference>
<dbReference type="PDB" id="3J7R">
    <property type="method" value="EM"/>
    <property type="resolution" value="3.90 A"/>
    <property type="chains" value="SP=1-145"/>
</dbReference>
<dbReference type="PDBsum" id="3J7P"/>
<dbReference type="PDBsum" id="3J7R"/>
<dbReference type="SMR" id="P62844"/>
<dbReference type="FunCoup" id="P62844">
    <property type="interactions" value="1676"/>
</dbReference>
<dbReference type="STRING" id="9823.ENSSSCP00000045242"/>
<dbReference type="PaxDb" id="9823-ENSSSCP00000023972"/>
<dbReference type="PeptideAtlas" id="P62844"/>
<dbReference type="Ensembl" id="ENSSSCT00000102918.1">
    <property type="protein sequence ID" value="ENSSSCP00000075558.1"/>
    <property type="gene ID" value="ENSSSCG00000033169.3"/>
</dbReference>
<dbReference type="Ensembl" id="ENSSSCT00015110442.1">
    <property type="protein sequence ID" value="ENSSSCP00015047189.1"/>
    <property type="gene ID" value="ENSSSCG00015081035.1"/>
</dbReference>
<dbReference type="Ensembl" id="ENSSSCT00040022188.1">
    <property type="protein sequence ID" value="ENSSSCP00040009292.1"/>
    <property type="gene ID" value="ENSSSCG00040016424.1"/>
</dbReference>
<dbReference type="Ensembl" id="ENSSSCT00065001208.1">
    <property type="protein sequence ID" value="ENSSSCP00065000349.1"/>
    <property type="gene ID" value="ENSSSCG00065000978.1"/>
</dbReference>
<dbReference type="Ensembl" id="ENSSSCT00070053486.1">
    <property type="protein sequence ID" value="ENSSSCP00070045331.1"/>
    <property type="gene ID" value="ENSSSCG00070026677.1"/>
</dbReference>
<dbReference type="Ensembl" id="ENSSSCT00105059598">
    <property type="protein sequence ID" value="ENSSSCP00105041981"/>
    <property type="gene ID" value="ENSSSCG00105031343"/>
</dbReference>
<dbReference type="Ensembl" id="ENSSSCT00110026031">
    <property type="protein sequence ID" value="ENSSSCP00110017438"/>
    <property type="gene ID" value="ENSSSCG00110013646"/>
</dbReference>
<dbReference type="Ensembl" id="ENSSSCT00115022776">
    <property type="protein sequence ID" value="ENSSSCP00115021588"/>
    <property type="gene ID" value="ENSSSCG00115013094"/>
</dbReference>
<dbReference type="Ensembl" id="ENSSSCT00130070522">
    <property type="protein sequence ID" value="ENSSSCP00130050874"/>
    <property type="gene ID" value="ENSSSCG00130035969"/>
</dbReference>
<dbReference type="GeneID" id="397607"/>
<dbReference type="KEGG" id="ssc:397607"/>
<dbReference type="CTD" id="6209"/>
<dbReference type="VGNC" id="VGNC:112736">
    <property type="gene designation" value="RPS15"/>
</dbReference>
<dbReference type="eggNOG" id="KOG0898">
    <property type="taxonomic scope" value="Eukaryota"/>
</dbReference>
<dbReference type="GeneTree" id="ENSGT00390000000475"/>
<dbReference type="HOGENOM" id="CLU_097347_1_0_1"/>
<dbReference type="InParanoid" id="P62844"/>
<dbReference type="OMA" id="KTHCRDM"/>
<dbReference type="OrthoDB" id="10258210at2759"/>
<dbReference type="TreeFam" id="TF318650"/>
<dbReference type="Reactome" id="R-SSC-156827">
    <property type="pathway name" value="L13a-mediated translational silencing of Ceruloplasmin expression"/>
</dbReference>
<dbReference type="Reactome" id="R-SSC-1799339">
    <property type="pathway name" value="SRP-dependent cotranslational protein targeting to membrane"/>
</dbReference>
<dbReference type="Reactome" id="R-SSC-72649">
    <property type="pathway name" value="Translation initiation complex formation"/>
</dbReference>
<dbReference type="Reactome" id="R-SSC-72689">
    <property type="pathway name" value="Formation of a pool of free 40S subunits"/>
</dbReference>
<dbReference type="Reactome" id="R-SSC-72695">
    <property type="pathway name" value="Formation of the ternary complex, and subsequently, the 43S complex"/>
</dbReference>
<dbReference type="Reactome" id="R-SSC-72702">
    <property type="pathway name" value="Ribosomal scanning and start codon recognition"/>
</dbReference>
<dbReference type="Reactome" id="R-SSC-72706">
    <property type="pathway name" value="GTP hydrolysis and joining of the 60S ribosomal subunit"/>
</dbReference>
<dbReference type="Reactome" id="R-SSC-975956">
    <property type="pathway name" value="Nonsense Mediated Decay (NMD) independent of the Exon Junction Complex (EJC)"/>
</dbReference>
<dbReference type="Reactome" id="R-SSC-975957">
    <property type="pathway name" value="Nonsense Mediated Decay (NMD) enhanced by the Exon Junction Complex (EJC)"/>
</dbReference>
<dbReference type="Proteomes" id="UP000008227">
    <property type="component" value="Chromosome 2"/>
</dbReference>
<dbReference type="Proteomes" id="UP000314985">
    <property type="component" value="Chromosome 2"/>
</dbReference>
<dbReference type="Proteomes" id="UP000694570">
    <property type="component" value="Unplaced"/>
</dbReference>
<dbReference type="Proteomes" id="UP000694571">
    <property type="component" value="Unplaced"/>
</dbReference>
<dbReference type="Proteomes" id="UP000694720">
    <property type="component" value="Unplaced"/>
</dbReference>
<dbReference type="Proteomes" id="UP000694722">
    <property type="component" value="Unplaced"/>
</dbReference>
<dbReference type="Proteomes" id="UP000694723">
    <property type="component" value="Unplaced"/>
</dbReference>
<dbReference type="Proteomes" id="UP000694724">
    <property type="component" value="Unplaced"/>
</dbReference>
<dbReference type="Proteomes" id="UP000694725">
    <property type="component" value="Unplaced"/>
</dbReference>
<dbReference type="Proteomes" id="UP000694726">
    <property type="component" value="Unplaced"/>
</dbReference>
<dbReference type="Proteomes" id="UP000694727">
    <property type="component" value="Unplaced"/>
</dbReference>
<dbReference type="Proteomes" id="UP000694728">
    <property type="component" value="Unplaced"/>
</dbReference>
<dbReference type="GO" id="GO:0098556">
    <property type="term" value="C:cytoplasmic side of rough endoplasmic reticulum membrane"/>
    <property type="evidence" value="ECO:0000314"/>
    <property type="project" value="UniProtKB"/>
</dbReference>
<dbReference type="GO" id="GO:0022627">
    <property type="term" value="C:cytosolic small ribosomal subunit"/>
    <property type="evidence" value="ECO:0000314"/>
    <property type="project" value="UniProtKB"/>
</dbReference>
<dbReference type="GO" id="GO:0003723">
    <property type="term" value="F:RNA binding"/>
    <property type="evidence" value="ECO:0007669"/>
    <property type="project" value="InterPro"/>
</dbReference>
<dbReference type="GO" id="GO:0003735">
    <property type="term" value="F:structural constituent of ribosome"/>
    <property type="evidence" value="ECO:0007669"/>
    <property type="project" value="InterPro"/>
</dbReference>
<dbReference type="GO" id="GO:0006412">
    <property type="term" value="P:translation"/>
    <property type="evidence" value="ECO:0007669"/>
    <property type="project" value="InterPro"/>
</dbReference>
<dbReference type="FunFam" id="3.30.860.10:FF:000002">
    <property type="entry name" value="40S ribosomal protein S15"/>
    <property type="match status" value="1"/>
</dbReference>
<dbReference type="Gene3D" id="3.30.860.10">
    <property type="entry name" value="30s Ribosomal Protein S19, Chain A"/>
    <property type="match status" value="1"/>
</dbReference>
<dbReference type="HAMAP" id="MF_00531">
    <property type="entry name" value="Ribosomal_uS19"/>
    <property type="match status" value="1"/>
</dbReference>
<dbReference type="InterPro" id="IPR002222">
    <property type="entry name" value="Ribosomal_uS19"/>
</dbReference>
<dbReference type="InterPro" id="IPR020934">
    <property type="entry name" value="Ribosomal_uS19_CS"/>
</dbReference>
<dbReference type="InterPro" id="IPR005713">
    <property type="entry name" value="Ribosomal_uS19_euk/arc"/>
</dbReference>
<dbReference type="InterPro" id="IPR023575">
    <property type="entry name" value="Ribosomal_uS19_SF"/>
</dbReference>
<dbReference type="NCBIfam" id="NF003121">
    <property type="entry name" value="PRK04038.1"/>
    <property type="match status" value="1"/>
</dbReference>
<dbReference type="NCBIfam" id="TIGR01025">
    <property type="entry name" value="uS19_arch"/>
    <property type="match status" value="1"/>
</dbReference>
<dbReference type="PANTHER" id="PTHR11880">
    <property type="entry name" value="RIBOSOMAL PROTEIN S19P FAMILY MEMBER"/>
    <property type="match status" value="1"/>
</dbReference>
<dbReference type="PANTHER" id="PTHR11880:SF2">
    <property type="entry name" value="SMALL RIBOSOMAL SUBUNIT PROTEIN US19"/>
    <property type="match status" value="1"/>
</dbReference>
<dbReference type="Pfam" id="PF00203">
    <property type="entry name" value="Ribosomal_S19"/>
    <property type="match status" value="1"/>
</dbReference>
<dbReference type="PIRSF" id="PIRSF002144">
    <property type="entry name" value="Ribosomal_S19"/>
    <property type="match status" value="1"/>
</dbReference>
<dbReference type="PRINTS" id="PR00975">
    <property type="entry name" value="RIBOSOMALS19"/>
</dbReference>
<dbReference type="SUPFAM" id="SSF54570">
    <property type="entry name" value="Ribosomal protein S19"/>
    <property type="match status" value="1"/>
</dbReference>
<dbReference type="PROSITE" id="PS00323">
    <property type="entry name" value="RIBOSOMAL_S19"/>
    <property type="match status" value="1"/>
</dbReference>
<name>RS15_PIG</name>
<feature type="initiator methionine" description="Removed" evidence="1">
    <location>
        <position position="1"/>
    </location>
</feature>
<feature type="chain" id="PRO_0000130030" description="Small ribosomal subunit protein uS19">
    <location>
        <begin position="2"/>
        <end position="145"/>
    </location>
</feature>
<feature type="modified residue" description="N-acetylalanine" evidence="1">
    <location>
        <position position="2"/>
    </location>
</feature>
<feature type="cross-link" description="Glycyl lysine isopeptide (Lys-Gly) (interchain with G-Cter in SUMO2)" evidence="1">
    <location>
        <position position="108"/>
    </location>
</feature>
<feature type="sequence conflict" description="In Ref. 1; CAA23089." evidence="2" ref="1">
    <original>HS</original>
    <variation>DF</variation>
    <location>
        <begin position="137"/>
        <end position="138"/>
    </location>
</feature>
<comment type="function">
    <text evidence="1">Component of the small ribosomal subunit. The ribosome is a large ribonucleoprotein complex responsible for the synthesis of proteins in the cell.</text>
</comment>
<comment type="subunit">
    <text evidence="1">Component of the small ribosomal subunit.</text>
</comment>
<comment type="subcellular location">
    <subcellularLocation>
        <location evidence="1">Cytoplasm</location>
    </subcellularLocation>
</comment>
<comment type="similarity">
    <text evidence="2">Belongs to the universal ribosomal protein uS19 family.</text>
</comment>
<sequence>MAEVEQKKKRTFRKFTYRGVDLDQLLDMSYEQLMQLYSARQRRRLNRGLRRKQHSLLKRLRKAKKEAPPMEKPEVVKTHLRDMIILPEMVGSMVGVYNGKTFNQVEIKPEMIGHYLGEFSITYKPVKHGRPGIGATHSSRFIPLK</sequence>
<gene>
    <name type="primary">RPS15</name>
    <name type="synonym">RIG</name>
</gene>
<reference key="1">
    <citation type="journal article" date="1996" name="Mamm. Genome">
        <title>Evaluation and characterization of a porcine small intestine cDNA library: analysis of 839 clones.</title>
        <authorList>
            <person name="Winteroe A.K."/>
            <person name="Fredholm M."/>
            <person name="Davies W."/>
        </authorList>
    </citation>
    <scope>NUCLEOTIDE SEQUENCE [LARGE SCALE MRNA]</scope>
    <source>
        <tissue>Small intestine</tissue>
    </source>
</reference>
<reference key="2">
    <citation type="submission" date="1997-07" db="EMBL/GenBank/DDBJ databases">
        <title>Cloning of the pig gene similar to the human insulinoma rig-analog DNA-binding protein.</title>
        <authorList>
            <person name="Nishimura M."/>
            <person name="Satoh H."/>
            <person name="Suzuki H."/>
            <person name="Hamasima N."/>
        </authorList>
    </citation>
    <scope>NUCLEOTIDE SEQUENCE [MRNA]</scope>
    <source>
        <tissue>Adipose tissue</tissue>
    </source>
</reference>
<evidence type="ECO:0000250" key="1">
    <source>
        <dbReference type="UniProtKB" id="P62841"/>
    </source>
</evidence>
<evidence type="ECO:0000305" key="2"/>
<organism>
    <name type="scientific">Sus scrofa</name>
    <name type="common">Pig</name>
    <dbReference type="NCBI Taxonomy" id="9823"/>
    <lineage>
        <taxon>Eukaryota</taxon>
        <taxon>Metazoa</taxon>
        <taxon>Chordata</taxon>
        <taxon>Craniata</taxon>
        <taxon>Vertebrata</taxon>
        <taxon>Euteleostomi</taxon>
        <taxon>Mammalia</taxon>
        <taxon>Eutheria</taxon>
        <taxon>Laurasiatheria</taxon>
        <taxon>Artiodactyla</taxon>
        <taxon>Suina</taxon>
        <taxon>Suidae</taxon>
        <taxon>Sus</taxon>
    </lineage>
</organism>
<keyword id="KW-0002">3D-structure</keyword>
<keyword id="KW-0007">Acetylation</keyword>
<keyword id="KW-0963">Cytoplasm</keyword>
<keyword id="KW-1017">Isopeptide bond</keyword>
<keyword id="KW-1185">Reference proteome</keyword>
<keyword id="KW-0687">Ribonucleoprotein</keyword>
<keyword id="KW-0689">Ribosomal protein</keyword>
<keyword id="KW-0832">Ubl conjugation</keyword>
<protein>
    <recommendedName>
        <fullName evidence="2">Small ribosomal subunit protein uS19</fullName>
    </recommendedName>
    <alternativeName>
        <fullName>40S ribosomal protein S15</fullName>
    </alternativeName>
    <alternativeName>
        <fullName>RIG protein</fullName>
    </alternativeName>
</protein>
<accession>P62844</accession>
<accession>P11174</accession>
<accession>Q29186</accession>